<sequence>MTNPIIAFKNVSKVFEDSNTVVLKDINFELEEGKFYTLLGASGSGKSTILNIIAGLLEASTGDIYLDGKRINDVPTNKRDVHTVFQNYALFPHMTVFENVAFPLKLKKMDKKEIQKRVQETLKMVRLEGFEKRAIQKLSGGQRQRVAIARAIINQPKVVLLDEPLSALDLKLRTEMQYELRELQQRLGITFVFVTHDQEEALAMSDWIFVMNEGEIVQSGTPVDIYDEPINHFVATFIGESNILSGKMIEDYLVEFNGKRFEAVDGGMRPNESVQVVIRPEDLQITLPDEGKLQVKVDTQLFRGVHYEIIAYDDLGNEWMIHSTRKAIEGEVIGLDFTPEDIHIMRLNETEEEFDARIEEYVDTDDHEDGLINAIEEERNEENL</sequence>
<accession>Q8DZJ0</accession>
<proteinExistence type="inferred from homology"/>
<gene>
    <name evidence="1" type="primary">potA</name>
    <name type="ordered locus">SAG1111</name>
</gene>
<reference key="1">
    <citation type="journal article" date="2002" name="Proc. Natl. Acad. Sci. U.S.A.">
        <title>Complete genome sequence and comparative genomic analysis of an emerging human pathogen, serotype V Streptococcus agalactiae.</title>
        <authorList>
            <person name="Tettelin H."/>
            <person name="Masignani V."/>
            <person name="Cieslewicz M.J."/>
            <person name="Eisen J.A."/>
            <person name="Peterson S.N."/>
            <person name="Wessels M.R."/>
            <person name="Paulsen I.T."/>
            <person name="Nelson K.E."/>
            <person name="Margarit I."/>
            <person name="Read T.D."/>
            <person name="Madoff L.C."/>
            <person name="Wolf A.M."/>
            <person name="Beanan M.J."/>
            <person name="Brinkac L.M."/>
            <person name="Daugherty S.C."/>
            <person name="DeBoy R.T."/>
            <person name="Durkin A.S."/>
            <person name="Kolonay J.F."/>
            <person name="Madupu R."/>
            <person name="Lewis M.R."/>
            <person name="Radune D."/>
            <person name="Fedorova N.B."/>
            <person name="Scanlan D."/>
            <person name="Khouri H.M."/>
            <person name="Mulligan S."/>
            <person name="Carty H.A."/>
            <person name="Cline R.T."/>
            <person name="Van Aken S.E."/>
            <person name="Gill J."/>
            <person name="Scarselli M."/>
            <person name="Mora M."/>
            <person name="Iacobini E.T."/>
            <person name="Brettoni C."/>
            <person name="Galli G."/>
            <person name="Mariani M."/>
            <person name="Vegni F."/>
            <person name="Maione D."/>
            <person name="Rinaudo D."/>
            <person name="Rappuoli R."/>
            <person name="Telford J.L."/>
            <person name="Kasper D.L."/>
            <person name="Grandi G."/>
            <person name="Fraser C.M."/>
        </authorList>
    </citation>
    <scope>NUCLEOTIDE SEQUENCE [LARGE SCALE GENOMIC DNA]</scope>
    <source>
        <strain>ATCC BAA-611 / 2603 V/R</strain>
    </source>
</reference>
<comment type="function">
    <text evidence="1">Part of the ABC transporter complex PotABCD involved in spermidine/putrescine import. Responsible for energy coupling to the transport system.</text>
</comment>
<comment type="catalytic activity">
    <reaction evidence="1">
        <text>ATP + H2O + polyamine-[polyamine-binding protein]Side 1 = ADP + phosphate + polyamineSide 2 + [polyamine-binding protein]Side 1.</text>
        <dbReference type="EC" id="7.6.2.11"/>
    </reaction>
</comment>
<comment type="subunit">
    <text evidence="1">The complex is composed of two ATP-binding proteins (PotA), two transmembrane proteins (PotB and PotC) and a solute-binding protein (PotD).</text>
</comment>
<comment type="subcellular location">
    <subcellularLocation>
        <location evidence="1">Cell membrane</location>
        <topology evidence="1">Peripheral membrane protein</topology>
    </subcellularLocation>
</comment>
<comment type="similarity">
    <text evidence="1">Belongs to the ABC transporter superfamily. Spermidine/putrescine importer (TC 3.A.1.11.1) family.</text>
</comment>
<protein>
    <recommendedName>
        <fullName evidence="1">Spermidine/putrescine import ATP-binding protein PotA</fullName>
        <ecNumber evidence="1">7.6.2.11</ecNumber>
    </recommendedName>
</protein>
<feature type="chain" id="PRO_0000286300" description="Spermidine/putrescine import ATP-binding protein PotA">
    <location>
        <begin position="1"/>
        <end position="384"/>
    </location>
</feature>
<feature type="domain" description="ABC transporter" evidence="1">
    <location>
        <begin position="6"/>
        <end position="238"/>
    </location>
</feature>
<feature type="binding site" evidence="1">
    <location>
        <begin position="40"/>
        <end position="47"/>
    </location>
    <ligand>
        <name>ATP</name>
        <dbReference type="ChEBI" id="CHEBI:30616"/>
    </ligand>
</feature>
<keyword id="KW-0067">ATP-binding</keyword>
<keyword id="KW-1003">Cell membrane</keyword>
<keyword id="KW-0472">Membrane</keyword>
<keyword id="KW-0547">Nucleotide-binding</keyword>
<keyword id="KW-1185">Reference proteome</keyword>
<keyword id="KW-1278">Translocase</keyword>
<keyword id="KW-0813">Transport</keyword>
<organism>
    <name type="scientific">Streptococcus agalactiae serotype V (strain ATCC BAA-611 / 2603 V/R)</name>
    <dbReference type="NCBI Taxonomy" id="208435"/>
    <lineage>
        <taxon>Bacteria</taxon>
        <taxon>Bacillati</taxon>
        <taxon>Bacillota</taxon>
        <taxon>Bacilli</taxon>
        <taxon>Lactobacillales</taxon>
        <taxon>Streptococcaceae</taxon>
        <taxon>Streptococcus</taxon>
    </lineage>
</organism>
<name>POTA_STRA5</name>
<evidence type="ECO:0000255" key="1">
    <source>
        <dbReference type="HAMAP-Rule" id="MF_01726"/>
    </source>
</evidence>
<dbReference type="EC" id="7.6.2.11" evidence="1"/>
<dbReference type="EMBL" id="AE009948">
    <property type="protein sequence ID" value="AAM99992.1"/>
    <property type="molecule type" value="Genomic_DNA"/>
</dbReference>
<dbReference type="RefSeq" id="NP_688120.1">
    <property type="nucleotide sequence ID" value="NC_004116.1"/>
</dbReference>
<dbReference type="RefSeq" id="WP_000184098.1">
    <property type="nucleotide sequence ID" value="NC_004116.1"/>
</dbReference>
<dbReference type="SMR" id="Q8DZJ0"/>
<dbReference type="STRING" id="208435.SAG1111"/>
<dbReference type="KEGG" id="sag:SAG1111"/>
<dbReference type="PATRIC" id="fig|208435.3.peg.1119"/>
<dbReference type="HOGENOM" id="CLU_000604_1_1_9"/>
<dbReference type="OrthoDB" id="9790614at2"/>
<dbReference type="Proteomes" id="UP000000821">
    <property type="component" value="Chromosome"/>
</dbReference>
<dbReference type="GO" id="GO:0043190">
    <property type="term" value="C:ATP-binding cassette (ABC) transporter complex"/>
    <property type="evidence" value="ECO:0007669"/>
    <property type="project" value="InterPro"/>
</dbReference>
<dbReference type="GO" id="GO:0015417">
    <property type="term" value="F:ABC-type polyamine transporter activity"/>
    <property type="evidence" value="ECO:0007669"/>
    <property type="project" value="UniProtKB-EC"/>
</dbReference>
<dbReference type="GO" id="GO:0005524">
    <property type="term" value="F:ATP binding"/>
    <property type="evidence" value="ECO:0007669"/>
    <property type="project" value="UniProtKB-KW"/>
</dbReference>
<dbReference type="GO" id="GO:0016887">
    <property type="term" value="F:ATP hydrolysis activity"/>
    <property type="evidence" value="ECO:0007669"/>
    <property type="project" value="InterPro"/>
</dbReference>
<dbReference type="FunFam" id="3.40.50.300:FF:000042">
    <property type="entry name" value="Maltose/maltodextrin ABC transporter, ATP-binding protein"/>
    <property type="match status" value="1"/>
</dbReference>
<dbReference type="Gene3D" id="2.40.50.100">
    <property type="match status" value="1"/>
</dbReference>
<dbReference type="Gene3D" id="3.40.50.300">
    <property type="entry name" value="P-loop containing nucleotide triphosphate hydrolases"/>
    <property type="match status" value="1"/>
</dbReference>
<dbReference type="InterPro" id="IPR003593">
    <property type="entry name" value="AAA+_ATPase"/>
</dbReference>
<dbReference type="InterPro" id="IPR050093">
    <property type="entry name" value="ABC_SmlMolc_Importer"/>
</dbReference>
<dbReference type="InterPro" id="IPR003439">
    <property type="entry name" value="ABC_transporter-like_ATP-bd"/>
</dbReference>
<dbReference type="InterPro" id="IPR017871">
    <property type="entry name" value="ABC_transporter-like_CS"/>
</dbReference>
<dbReference type="InterPro" id="IPR008995">
    <property type="entry name" value="Mo/tungstate-bd_C_term_dom"/>
</dbReference>
<dbReference type="InterPro" id="IPR027417">
    <property type="entry name" value="P-loop_NTPase"/>
</dbReference>
<dbReference type="InterPro" id="IPR005893">
    <property type="entry name" value="PotA-like"/>
</dbReference>
<dbReference type="InterPro" id="IPR013611">
    <property type="entry name" value="Transp-assoc_OB_typ2"/>
</dbReference>
<dbReference type="NCBIfam" id="TIGR01187">
    <property type="entry name" value="potA"/>
    <property type="match status" value="1"/>
</dbReference>
<dbReference type="PANTHER" id="PTHR42781">
    <property type="entry name" value="SPERMIDINE/PUTRESCINE IMPORT ATP-BINDING PROTEIN POTA"/>
    <property type="match status" value="1"/>
</dbReference>
<dbReference type="PANTHER" id="PTHR42781:SF4">
    <property type="entry name" value="SPERMIDINE_PUTRESCINE IMPORT ATP-BINDING PROTEIN POTA"/>
    <property type="match status" value="1"/>
</dbReference>
<dbReference type="Pfam" id="PF00005">
    <property type="entry name" value="ABC_tran"/>
    <property type="match status" value="1"/>
</dbReference>
<dbReference type="Pfam" id="PF08402">
    <property type="entry name" value="TOBE_2"/>
    <property type="match status" value="1"/>
</dbReference>
<dbReference type="SMART" id="SM00382">
    <property type="entry name" value="AAA"/>
    <property type="match status" value="1"/>
</dbReference>
<dbReference type="SUPFAM" id="SSF50331">
    <property type="entry name" value="MOP-like"/>
    <property type="match status" value="1"/>
</dbReference>
<dbReference type="SUPFAM" id="SSF52540">
    <property type="entry name" value="P-loop containing nucleoside triphosphate hydrolases"/>
    <property type="match status" value="1"/>
</dbReference>
<dbReference type="PROSITE" id="PS00211">
    <property type="entry name" value="ABC_TRANSPORTER_1"/>
    <property type="match status" value="1"/>
</dbReference>
<dbReference type="PROSITE" id="PS50893">
    <property type="entry name" value="ABC_TRANSPORTER_2"/>
    <property type="match status" value="1"/>
</dbReference>
<dbReference type="PROSITE" id="PS51305">
    <property type="entry name" value="POTA"/>
    <property type="match status" value="1"/>
</dbReference>